<evidence type="ECO:0000255" key="1">
    <source>
        <dbReference type="HAMAP-Rule" id="MF_00365"/>
    </source>
</evidence>
<name>RECF_STRP8</name>
<comment type="function">
    <text evidence="1">The RecF protein is involved in DNA metabolism; it is required for DNA replication and normal SOS inducibility. RecF binds preferentially to single-stranded, linear DNA. It also seems to bind ATP.</text>
</comment>
<comment type="subcellular location">
    <subcellularLocation>
        <location evidence="1">Cytoplasm</location>
    </subcellularLocation>
</comment>
<comment type="similarity">
    <text evidence="1">Belongs to the RecF family.</text>
</comment>
<keyword id="KW-0067">ATP-binding</keyword>
<keyword id="KW-0963">Cytoplasm</keyword>
<keyword id="KW-0227">DNA damage</keyword>
<keyword id="KW-0234">DNA repair</keyword>
<keyword id="KW-0235">DNA replication</keyword>
<keyword id="KW-0238">DNA-binding</keyword>
<keyword id="KW-0547">Nucleotide-binding</keyword>
<keyword id="KW-0742">SOS response</keyword>
<dbReference type="EMBL" id="AE009949">
    <property type="protein sequence ID" value="AAL98671.1"/>
    <property type="molecule type" value="Genomic_DNA"/>
</dbReference>
<dbReference type="RefSeq" id="WP_002982021.1">
    <property type="nucleotide sequence ID" value="NC_003485.1"/>
</dbReference>
<dbReference type="SMR" id="Q8NYZ4"/>
<dbReference type="KEGG" id="spm:spyM18_2242"/>
<dbReference type="HOGENOM" id="CLU_040267_0_1_9"/>
<dbReference type="GO" id="GO:0005737">
    <property type="term" value="C:cytoplasm"/>
    <property type="evidence" value="ECO:0007669"/>
    <property type="project" value="UniProtKB-SubCell"/>
</dbReference>
<dbReference type="GO" id="GO:0005524">
    <property type="term" value="F:ATP binding"/>
    <property type="evidence" value="ECO:0007669"/>
    <property type="project" value="UniProtKB-UniRule"/>
</dbReference>
<dbReference type="GO" id="GO:0003697">
    <property type="term" value="F:single-stranded DNA binding"/>
    <property type="evidence" value="ECO:0007669"/>
    <property type="project" value="UniProtKB-UniRule"/>
</dbReference>
<dbReference type="GO" id="GO:0006260">
    <property type="term" value="P:DNA replication"/>
    <property type="evidence" value="ECO:0007669"/>
    <property type="project" value="UniProtKB-UniRule"/>
</dbReference>
<dbReference type="GO" id="GO:0000731">
    <property type="term" value="P:DNA synthesis involved in DNA repair"/>
    <property type="evidence" value="ECO:0007669"/>
    <property type="project" value="TreeGrafter"/>
</dbReference>
<dbReference type="GO" id="GO:0006302">
    <property type="term" value="P:double-strand break repair"/>
    <property type="evidence" value="ECO:0007669"/>
    <property type="project" value="TreeGrafter"/>
</dbReference>
<dbReference type="GO" id="GO:0009432">
    <property type="term" value="P:SOS response"/>
    <property type="evidence" value="ECO:0007669"/>
    <property type="project" value="UniProtKB-UniRule"/>
</dbReference>
<dbReference type="CDD" id="cd03242">
    <property type="entry name" value="ABC_RecF"/>
    <property type="match status" value="1"/>
</dbReference>
<dbReference type="Gene3D" id="3.40.50.300">
    <property type="entry name" value="P-loop containing nucleotide triphosphate hydrolases"/>
    <property type="match status" value="1"/>
</dbReference>
<dbReference type="Gene3D" id="1.20.1050.90">
    <property type="entry name" value="RecF/RecN/SMC, N-terminal domain"/>
    <property type="match status" value="1"/>
</dbReference>
<dbReference type="HAMAP" id="MF_00365">
    <property type="entry name" value="RecF"/>
    <property type="match status" value="1"/>
</dbReference>
<dbReference type="InterPro" id="IPR001238">
    <property type="entry name" value="DNA-binding_RecF"/>
</dbReference>
<dbReference type="InterPro" id="IPR018078">
    <property type="entry name" value="DNA-binding_RecF_CS"/>
</dbReference>
<dbReference type="InterPro" id="IPR027417">
    <property type="entry name" value="P-loop_NTPase"/>
</dbReference>
<dbReference type="InterPro" id="IPR003395">
    <property type="entry name" value="RecF/RecN/SMC_N"/>
</dbReference>
<dbReference type="InterPro" id="IPR042174">
    <property type="entry name" value="RecF_2"/>
</dbReference>
<dbReference type="NCBIfam" id="TIGR00611">
    <property type="entry name" value="recf"/>
    <property type="match status" value="1"/>
</dbReference>
<dbReference type="PANTHER" id="PTHR32182">
    <property type="entry name" value="DNA REPLICATION AND REPAIR PROTEIN RECF"/>
    <property type="match status" value="1"/>
</dbReference>
<dbReference type="PANTHER" id="PTHR32182:SF0">
    <property type="entry name" value="DNA REPLICATION AND REPAIR PROTEIN RECF"/>
    <property type="match status" value="1"/>
</dbReference>
<dbReference type="Pfam" id="PF02463">
    <property type="entry name" value="SMC_N"/>
    <property type="match status" value="1"/>
</dbReference>
<dbReference type="SUPFAM" id="SSF52540">
    <property type="entry name" value="P-loop containing nucleoside triphosphate hydrolases"/>
    <property type="match status" value="1"/>
</dbReference>
<dbReference type="PROSITE" id="PS00617">
    <property type="entry name" value="RECF_1"/>
    <property type="match status" value="1"/>
</dbReference>
<dbReference type="PROSITE" id="PS00618">
    <property type="entry name" value="RECF_2"/>
    <property type="match status" value="1"/>
</dbReference>
<accession>Q8NYZ4</accession>
<protein>
    <recommendedName>
        <fullName evidence="1">DNA replication and repair protein RecF</fullName>
    </recommendedName>
</protein>
<gene>
    <name evidence="1" type="primary">recF</name>
    <name type="ordered locus">spyM18_2242</name>
</gene>
<reference key="1">
    <citation type="journal article" date="2002" name="Proc. Natl. Acad. Sci. U.S.A.">
        <title>Genome sequence and comparative microarray analysis of serotype M18 group A Streptococcus strains associated with acute rheumatic fever outbreaks.</title>
        <authorList>
            <person name="Smoot J.C."/>
            <person name="Barbian K.D."/>
            <person name="Van Gompel J.J."/>
            <person name="Smoot L.M."/>
            <person name="Chaussee M.S."/>
            <person name="Sylva G.L."/>
            <person name="Sturdevant D.E."/>
            <person name="Ricklefs S.M."/>
            <person name="Porcella S.F."/>
            <person name="Parkins L.D."/>
            <person name="Beres S.B."/>
            <person name="Campbell D.S."/>
            <person name="Smith T.M."/>
            <person name="Zhang Q."/>
            <person name="Kapur V."/>
            <person name="Daly J.A."/>
            <person name="Veasy L.G."/>
            <person name="Musser J.M."/>
        </authorList>
    </citation>
    <scope>NUCLEOTIDE SEQUENCE [LARGE SCALE GENOMIC DNA]</scope>
    <source>
        <strain>MGAS8232</strain>
    </source>
</reference>
<proteinExistence type="inferred from homology"/>
<feature type="chain" id="PRO_0000196477" description="DNA replication and repair protein RecF">
    <location>
        <begin position="1"/>
        <end position="368"/>
    </location>
</feature>
<feature type="binding site" evidence="1">
    <location>
        <begin position="30"/>
        <end position="37"/>
    </location>
    <ligand>
        <name>ATP</name>
        <dbReference type="ChEBI" id="CHEBI:30616"/>
    </ligand>
</feature>
<sequence length="368" mass="41782">MWIKELELKHYRNYDHLLASFSSGLNVFIGNNAQGKTNFLEAIYFLSLTRSHRTRADKELIHFDHSTVSLTGKIQRISGTVDLEINLSDKGRVTKINALKQAKLSDYIGTMMVVLFAPEDLQLVKGAPSLRRKFIDIDLGQIKPVYLSELSHYNHVLKQRNSYLKSAQQIDAAFLAVLDEQLAGYGARVMEHRIDFINALEKEANTHHQAISNGLESLSLSYQSSVVFDKKTNIYQQFLHQLEKNHQKDFFRKNTSVGPHRDDLAFYINGMNANFASQGQHRSLILSLKMAEVSLMKALTGDNPILLLDDVMSELDNTRQTKLLETVIKENVQTFITTTSLDHLSQLPEGIRIFHVTKGTVQVDSDIH</sequence>
<organism>
    <name type="scientific">Streptococcus pyogenes serotype M18 (strain MGAS8232)</name>
    <dbReference type="NCBI Taxonomy" id="186103"/>
    <lineage>
        <taxon>Bacteria</taxon>
        <taxon>Bacillati</taxon>
        <taxon>Bacillota</taxon>
        <taxon>Bacilli</taxon>
        <taxon>Lactobacillales</taxon>
        <taxon>Streptococcaceae</taxon>
        <taxon>Streptococcus</taxon>
    </lineage>
</organism>